<proteinExistence type="inferred from homology"/>
<reference key="1">
    <citation type="journal article" date="2017" name="Org. Lett.">
        <title>Late-stage terpene cyclization by an integral membrane cyclase in the biosynthesis of isoprenoid epoxycyclohexenone natural products.</title>
        <authorList>
            <person name="Tang M.C."/>
            <person name="Cui X."/>
            <person name="He X."/>
            <person name="Ding Z."/>
            <person name="Zhu T."/>
            <person name="Tang Y."/>
            <person name="Li D."/>
        </authorList>
    </citation>
    <scope>NUCLEOTIDE SEQUENCE [GENOMIC DNA]</scope>
    <scope>FUNCTION</scope>
    <scope>PATHWAY</scope>
    <source>
        <strain>LM2</strain>
    </source>
</reference>
<comment type="function">
    <text evidence="1 4">Short chain dehydrogenase; part of the gene cluster that mediates the biosynthesis of macrophorins, isoprenoid epoxycyclohexenones containing cyclized drimane moieties (PubMed:28926261). The first step of the pathway is the synthesis of 6-methylsalicylic acid (6-MSA) by the polyketide synthase macA (PubMed:28926261). 6-MSA is then converted to m-cresol by the decarboxylase macB (By similarity). The cytochrome P450 monooxygenase macC then catalyzes the oxidation of m-cresol to toluquinol (By similarity). Epoxidation of toluquinol is then performed by the short chain dehydrogenase macD, with the help of macE, and a further prenylation by macG leads to 7-deacetoxyyanuthone A (By similarity). The next step is the hydroxylation of C-22 of 7-deacetoxyyanuthone A by the cytochrome P450 monooxygenase macH to yield 22-deacetylyanuthone A (By similarity). O-Mevalon transferase macI then attaches mevalon to the hydroxyl group of 22-deacetylyanuthone A to produce yanuthone E (By similarity). The terpene cyclase macJ catalyzes the cyclization of 22-deacetylyanuthone A to macrophorin A (PubMed:28926261). MacJ is also able to catalyze cyclization of yanuthone E and 7-deacetoxyyanuthone A to their corresponding macrophorins (PubMed:28926261). The macJ products can be further modified by macH and macJ, as well as by the FAD-dependent monooxygenase macF, to produce additional macrophorins, including 4'-oxomacrophorin A, 4'-oxomacrophorin D and 4'-oxomacrophorin E (PubMed:28926261).</text>
</comment>
<comment type="pathway">
    <text evidence="4">Secondary metabolite biosynthesis; terpenoid biosynthesis.</text>
</comment>
<comment type="miscellaneous">
    <text evidence="4">The macrophorins cluster contains a single gene insertion (encoding for the terpene cyclase macJ) compared with the yanuthone cluster that produces the linear compound yanuthone.</text>
</comment>
<comment type="similarity">
    <text evidence="6">Belongs to the short-chain dehydrogenases/reductases (SDR) family.</text>
</comment>
<name>MACD_PENTR</name>
<accession>A0A2P1DP77</accession>
<keyword id="KW-0521">NADP</keyword>
<keyword id="KW-0560">Oxidoreductase</keyword>
<gene>
    <name evidence="5" type="primary">macD</name>
</gene>
<sequence length="330" mass="36328">MVNIIQPKVDPLPTGIGLTGKTVVITGASAGMGLEATKQLLRLRASTVILAVRNVAKGEACATSLRQDRRIQTHNPKPTIKVMELDVDDYHSVQRFSKQLREEIPVVHILILNAGIGLLKLERSASGHDRTTQVNYYSNVLLIAELLPYLQAGAEKTGSPARISWVGSRAHEVTSLEKKAPIKPGEGVLAHMDKEEAFVPFQRYGDSKLLCVMFMYNLAPRLDPKKVIINMMCPGMVNTNMSDVLPMHLRLIVNVVKSFRARPVEVGGWIILNSALVVGPESHGKFLNDKTISDKSAFIKSPAGQEIQKKLWEETINEIGTLTTLPAELK</sequence>
<evidence type="ECO:0000250" key="1">
    <source>
        <dbReference type="UniProtKB" id="G3Y422"/>
    </source>
</evidence>
<evidence type="ECO:0000250" key="2">
    <source>
        <dbReference type="UniProtKB" id="L0E2Z4"/>
    </source>
</evidence>
<evidence type="ECO:0000250" key="3">
    <source>
        <dbReference type="UniProtKB" id="O93868"/>
    </source>
</evidence>
<evidence type="ECO:0000269" key="4">
    <source>
    </source>
</evidence>
<evidence type="ECO:0000303" key="5">
    <source>
    </source>
</evidence>
<evidence type="ECO:0000305" key="6"/>
<protein>
    <recommendedName>
        <fullName evidence="5">Short chain dehydrogenase macD</fullName>
        <ecNumber evidence="1">1.1.1.-</ecNumber>
    </recommendedName>
    <alternativeName>
        <fullName evidence="5">Macrophorins biosynthesis cluster protein D</fullName>
    </alternativeName>
</protein>
<organism>
    <name type="scientific">Penicillium terrestre</name>
    <dbReference type="NCBI Taxonomy" id="374132"/>
    <lineage>
        <taxon>Eukaryota</taxon>
        <taxon>Fungi</taxon>
        <taxon>Dikarya</taxon>
        <taxon>Ascomycota</taxon>
        <taxon>Pezizomycotina</taxon>
        <taxon>Eurotiomycetes</taxon>
        <taxon>Eurotiomycetidae</taxon>
        <taxon>Eurotiales</taxon>
        <taxon>Aspergillaceae</taxon>
        <taxon>Penicillium</taxon>
    </lineage>
</organism>
<dbReference type="EC" id="1.1.1.-" evidence="1"/>
<dbReference type="EMBL" id="MF990002">
    <property type="protein sequence ID" value="AVK70103.1"/>
    <property type="molecule type" value="Genomic_DNA"/>
</dbReference>
<dbReference type="EMBL" id="MH388470">
    <property type="protein sequence ID" value="QBC75445.1"/>
    <property type="molecule type" value="Genomic_DNA"/>
</dbReference>
<dbReference type="SMR" id="A0A2P1DP77"/>
<dbReference type="UniPathway" id="UPA00213"/>
<dbReference type="GO" id="GO:0016491">
    <property type="term" value="F:oxidoreductase activity"/>
    <property type="evidence" value="ECO:0007669"/>
    <property type="project" value="UniProtKB-KW"/>
</dbReference>
<dbReference type="GO" id="GO:0016114">
    <property type="term" value="P:terpenoid biosynthetic process"/>
    <property type="evidence" value="ECO:0007669"/>
    <property type="project" value="UniProtKB-UniPathway"/>
</dbReference>
<dbReference type="Gene3D" id="3.40.50.720">
    <property type="entry name" value="NAD(P)-binding Rossmann-like Domain"/>
    <property type="match status" value="1"/>
</dbReference>
<dbReference type="InterPro" id="IPR036291">
    <property type="entry name" value="NAD(P)-bd_dom_sf"/>
</dbReference>
<dbReference type="InterPro" id="IPR002347">
    <property type="entry name" value="SDR_fam"/>
</dbReference>
<dbReference type="PANTHER" id="PTHR24320:SF252">
    <property type="entry name" value="DEHYDROGENASE_REDUCTASE FAMILY PROTEIN, PUTATIVE (AFU_ORTHOLOGUE AFUA_3G08550)-RELATED"/>
    <property type="match status" value="1"/>
</dbReference>
<dbReference type="PANTHER" id="PTHR24320">
    <property type="entry name" value="RETINOL DEHYDROGENASE"/>
    <property type="match status" value="1"/>
</dbReference>
<dbReference type="Pfam" id="PF00106">
    <property type="entry name" value="adh_short"/>
    <property type="match status" value="1"/>
</dbReference>
<dbReference type="PRINTS" id="PR00081">
    <property type="entry name" value="GDHRDH"/>
</dbReference>
<dbReference type="SUPFAM" id="SSF51735">
    <property type="entry name" value="NAD(P)-binding Rossmann-fold domains"/>
    <property type="match status" value="1"/>
</dbReference>
<feature type="chain" id="PRO_0000454088" description="Short chain dehydrogenase macD">
    <location>
        <begin position="1"/>
        <end position="330"/>
    </location>
</feature>
<feature type="active site" description="Proton donor" evidence="3">
    <location>
        <position position="204"/>
    </location>
</feature>
<feature type="active site" description="Lowers pKa of active site Tyr" evidence="3">
    <location>
        <position position="208"/>
    </location>
</feature>
<feature type="binding site" evidence="2">
    <location>
        <position position="57"/>
    </location>
    <ligand>
        <name>NADP(+)</name>
        <dbReference type="ChEBI" id="CHEBI:58349"/>
    </ligand>
</feature>
<feature type="binding site" evidence="2">
    <location>
        <position position="86"/>
    </location>
    <ligand>
        <name>NADP(+)</name>
        <dbReference type="ChEBI" id="CHEBI:58349"/>
    </ligand>
</feature>
<feature type="binding site" evidence="3">
    <location>
        <position position="113"/>
    </location>
    <ligand>
        <name>NADP(+)</name>
        <dbReference type="ChEBI" id="CHEBI:58349"/>
    </ligand>
</feature>
<feature type="binding site" evidence="3">
    <location>
        <position position="204"/>
    </location>
    <ligand>
        <name>NADP(+)</name>
        <dbReference type="ChEBI" id="CHEBI:58349"/>
    </ligand>
</feature>
<feature type="binding site" evidence="3">
    <location>
        <position position="208"/>
    </location>
    <ligand>
        <name>NADP(+)</name>
        <dbReference type="ChEBI" id="CHEBI:58349"/>
    </ligand>
</feature>